<proteinExistence type="evidence at transcript level"/>
<evidence type="ECO:0000250" key="1">
    <source>
        <dbReference type="UniProtKB" id="A0A061I403"/>
    </source>
</evidence>
<evidence type="ECO:0000250" key="2">
    <source>
        <dbReference type="UniProtKB" id="Q9BVA6"/>
    </source>
</evidence>
<evidence type="ECO:0000255" key="3"/>
<evidence type="ECO:0000255" key="4">
    <source>
        <dbReference type="PROSITE-ProRule" id="PRU00498"/>
    </source>
</evidence>
<evidence type="ECO:0000255" key="5">
    <source>
        <dbReference type="PROSITE-ProRule" id="PRU00791"/>
    </source>
</evidence>
<evidence type="ECO:0000305" key="6"/>
<sequence>MAVTECEWASLGSRIGLRAALVLLSGSLLVVLFPLSGLEHQYRTALNILLQCNLWGGDDRHTFTGQTRGLAVASTAIELLVLKQKPTSDVKFEAKAALNQALEMKRQGKKEKAHKLLHHALKMDPDHVDALNELGILLEEEKDIIQADYLYSKALTISPHNEKALINRDRTLPLVEEIDQRYFSLIDSKVKKLMSIPKGNPALRRVMEESYYHHIYHTVAIEGNTLSLSEIRHIIETRYAVPGKSLEEQNEVIGMHAAMKYVNATLVSRIGSVTIDNILEIHRRILGYVDPVEAGRFRRNQVFVGHHIPPHPRDVEKLMQEFVQWLNSEEAMSLHPVEFAALAHYKLVYIHPFVDGNGRTSRLLMNLILMQAGYPPITVRKEQRSEYYHVLEIANEGDVRPFIRFIAKCTESTLDLLLIATAEHPVGLPEPNHGFSECKQTITIKT</sequence>
<feature type="chain" id="PRO_0000381776" description="Protein adenylyltransferase FICD">
    <location>
        <begin position="1"/>
        <end position="446"/>
    </location>
</feature>
<feature type="topological domain" description="Cytoplasmic" evidence="2">
    <location>
        <begin position="1"/>
        <end position="18"/>
    </location>
</feature>
<feature type="transmembrane region" description="Helical; Signal-anchor for type II membrane protein" evidence="3">
    <location>
        <begin position="19"/>
        <end position="39"/>
    </location>
</feature>
<feature type="topological domain" description="Lumenal" evidence="2">
    <location>
        <begin position="40"/>
        <end position="446"/>
    </location>
</feature>
<feature type="repeat" description="TPR 1">
    <location>
        <begin position="94"/>
        <end position="127"/>
    </location>
</feature>
<feature type="repeat" description="TPR 2">
    <location>
        <begin position="128"/>
        <end position="161"/>
    </location>
</feature>
<feature type="domain" description="Fido" evidence="5">
    <location>
        <begin position="273"/>
        <end position="408"/>
    </location>
</feature>
<feature type="short sequence motif" description="Inhibitory (S/T)XXXE(G/N) motif" evidence="2">
    <location>
        <begin position="218"/>
        <end position="223"/>
    </location>
</feature>
<feature type="active site" evidence="2">
    <location>
        <position position="351"/>
    </location>
</feature>
<feature type="binding site" evidence="2">
    <location>
        <position position="222"/>
    </location>
    <ligand>
        <name>ATP</name>
        <dbReference type="ChEBI" id="CHEBI:30616"/>
    </ligand>
</feature>
<feature type="binding site" evidence="2">
    <location>
        <begin position="304"/>
        <end position="307"/>
    </location>
    <ligand>
        <name>ATP</name>
        <dbReference type="ChEBI" id="CHEBI:30616"/>
    </ligand>
</feature>
<feature type="binding site" evidence="2">
    <location>
        <begin position="355"/>
        <end position="362"/>
    </location>
    <ligand>
        <name>ATP</name>
        <dbReference type="ChEBI" id="CHEBI:30616"/>
    </ligand>
</feature>
<feature type="binding site" evidence="2">
    <location>
        <begin position="387"/>
        <end position="388"/>
    </location>
    <ligand>
        <name>ATP</name>
        <dbReference type="ChEBI" id="CHEBI:30616"/>
    </ligand>
</feature>
<feature type="binding site" evidence="2">
    <location>
        <position position="395"/>
    </location>
    <ligand>
        <name>ATP</name>
        <dbReference type="ChEBI" id="CHEBI:30616"/>
    </ligand>
</feature>
<feature type="site" description="Important for autoinhibition of adenylyltransferase activity" evidence="2">
    <location>
        <position position="222"/>
    </location>
</feature>
<feature type="glycosylation site" description="N-linked (GlcNAc...) asparagine" evidence="4">
    <location>
        <position position="263"/>
    </location>
</feature>
<gene>
    <name evidence="2" type="primary">ficd</name>
</gene>
<dbReference type="EC" id="2.7.7.108" evidence="2"/>
<dbReference type="EC" id="3.1.4.-" evidence="1"/>
<dbReference type="EMBL" id="BC167892">
    <property type="protein sequence ID" value="AAI67892.1"/>
    <property type="molecule type" value="mRNA"/>
</dbReference>
<dbReference type="RefSeq" id="NP_001135492.1">
    <property type="nucleotide sequence ID" value="NM_001142020.1"/>
</dbReference>
<dbReference type="RefSeq" id="XP_012812800.1">
    <property type="nucleotide sequence ID" value="XM_012957346.3"/>
</dbReference>
<dbReference type="RefSeq" id="XP_012812805.1">
    <property type="nucleotide sequence ID" value="XM_012957351.3"/>
</dbReference>
<dbReference type="RefSeq" id="XP_017946808.1">
    <property type="nucleotide sequence ID" value="XM_018091319.2"/>
</dbReference>
<dbReference type="RefSeq" id="XP_031752023.1">
    <property type="nucleotide sequence ID" value="XM_031896163.1"/>
</dbReference>
<dbReference type="SMR" id="B4F6I5"/>
<dbReference type="FunCoup" id="B4F6I5">
    <property type="interactions" value="369"/>
</dbReference>
<dbReference type="STRING" id="8364.ENSXETP00000016191"/>
<dbReference type="GlyCosmos" id="B4F6I5">
    <property type="glycosylation" value="1 site, No reported glycans"/>
</dbReference>
<dbReference type="PaxDb" id="8364-ENSXETP00000038311"/>
<dbReference type="GeneID" id="100216031"/>
<dbReference type="KEGG" id="xtr:100216031"/>
<dbReference type="AGR" id="Xenbase:XB-GENE-992753"/>
<dbReference type="CTD" id="11153"/>
<dbReference type="Xenbase" id="XB-GENE-992753">
    <property type="gene designation" value="ficd"/>
</dbReference>
<dbReference type="eggNOG" id="KOG3824">
    <property type="taxonomic scope" value="Eukaryota"/>
</dbReference>
<dbReference type="HOGENOM" id="CLU_040460_0_0_1"/>
<dbReference type="InParanoid" id="B4F6I5"/>
<dbReference type="OMA" id="QLRCQLW"/>
<dbReference type="OrthoDB" id="439046at2759"/>
<dbReference type="Proteomes" id="UP000008143">
    <property type="component" value="Chromosome 1"/>
</dbReference>
<dbReference type="Bgee" id="ENSXETG00000017652">
    <property type="expression patterns" value="Expressed in egg cell and 15 other cell types or tissues"/>
</dbReference>
<dbReference type="GO" id="GO:0005789">
    <property type="term" value="C:endoplasmic reticulum membrane"/>
    <property type="evidence" value="ECO:0000250"/>
    <property type="project" value="UniProtKB"/>
</dbReference>
<dbReference type="GO" id="GO:0070733">
    <property type="term" value="F:AMPylase activity"/>
    <property type="evidence" value="ECO:0000250"/>
    <property type="project" value="UniProtKB"/>
</dbReference>
<dbReference type="GO" id="GO:0005524">
    <property type="term" value="F:ATP binding"/>
    <property type="evidence" value="ECO:0000250"/>
    <property type="project" value="UniProtKB"/>
</dbReference>
<dbReference type="GO" id="GO:0044603">
    <property type="term" value="F:protein adenylylhydrolase activity"/>
    <property type="evidence" value="ECO:0000250"/>
    <property type="project" value="UniProtKB"/>
</dbReference>
<dbReference type="GO" id="GO:0042803">
    <property type="term" value="F:protein homodimerization activity"/>
    <property type="evidence" value="ECO:0000250"/>
    <property type="project" value="UniProtKB"/>
</dbReference>
<dbReference type="GO" id="GO:0051087">
    <property type="term" value="F:protein-folding chaperone binding"/>
    <property type="evidence" value="ECO:0000250"/>
    <property type="project" value="UniProtKB"/>
</dbReference>
<dbReference type="GO" id="GO:0018117">
    <property type="term" value="P:protein adenylylation"/>
    <property type="evidence" value="ECO:0000250"/>
    <property type="project" value="UniProtKB"/>
</dbReference>
<dbReference type="GO" id="GO:0044602">
    <property type="term" value="P:protein deadenylylation"/>
    <property type="evidence" value="ECO:0000250"/>
    <property type="project" value="UniProtKB"/>
</dbReference>
<dbReference type="GO" id="GO:1903894">
    <property type="term" value="P:regulation of IRE1-mediated unfolded protein response"/>
    <property type="evidence" value="ECO:0000250"/>
    <property type="project" value="UniProtKB"/>
</dbReference>
<dbReference type="GO" id="GO:0034976">
    <property type="term" value="P:response to endoplasmic reticulum stress"/>
    <property type="evidence" value="ECO:0000250"/>
    <property type="project" value="UniProtKB"/>
</dbReference>
<dbReference type="GO" id="GO:0006986">
    <property type="term" value="P:response to unfolded protein"/>
    <property type="evidence" value="ECO:0007669"/>
    <property type="project" value="UniProtKB-KW"/>
</dbReference>
<dbReference type="FunFam" id="1.10.3290.10:FF:000001">
    <property type="entry name" value="adenosine monophosphate-protein transferase FICD"/>
    <property type="match status" value="1"/>
</dbReference>
<dbReference type="FunFam" id="1.25.40.10:FF:000188">
    <property type="entry name" value="adenosine monophosphate-protein transferase FICD"/>
    <property type="match status" value="1"/>
</dbReference>
<dbReference type="Gene3D" id="1.10.3290.10">
    <property type="entry name" value="Fido-like domain"/>
    <property type="match status" value="1"/>
</dbReference>
<dbReference type="Gene3D" id="1.25.40.10">
    <property type="entry name" value="Tetratricopeptide repeat domain"/>
    <property type="match status" value="1"/>
</dbReference>
<dbReference type="InterPro" id="IPR003812">
    <property type="entry name" value="Fido"/>
</dbReference>
<dbReference type="InterPro" id="IPR036597">
    <property type="entry name" value="Fido-like_dom_sf"/>
</dbReference>
<dbReference type="InterPro" id="IPR040198">
    <property type="entry name" value="Fido_containing"/>
</dbReference>
<dbReference type="InterPro" id="IPR011990">
    <property type="entry name" value="TPR-like_helical_dom_sf"/>
</dbReference>
<dbReference type="InterPro" id="IPR019734">
    <property type="entry name" value="TPR_rpt"/>
</dbReference>
<dbReference type="PANTHER" id="PTHR13504">
    <property type="entry name" value="FIDO DOMAIN-CONTAINING PROTEIN DDB_G0283145"/>
    <property type="match status" value="1"/>
</dbReference>
<dbReference type="PANTHER" id="PTHR13504:SF34">
    <property type="entry name" value="PROTEIN ADENYLYLTRANSFERASE FICD"/>
    <property type="match status" value="1"/>
</dbReference>
<dbReference type="Pfam" id="PF02661">
    <property type="entry name" value="Fic"/>
    <property type="match status" value="1"/>
</dbReference>
<dbReference type="SMART" id="SM00028">
    <property type="entry name" value="TPR"/>
    <property type="match status" value="2"/>
</dbReference>
<dbReference type="SUPFAM" id="SSF140931">
    <property type="entry name" value="Fic-like"/>
    <property type="match status" value="1"/>
</dbReference>
<dbReference type="SUPFAM" id="SSF48452">
    <property type="entry name" value="TPR-like"/>
    <property type="match status" value="1"/>
</dbReference>
<dbReference type="PROSITE" id="PS51459">
    <property type="entry name" value="FIDO"/>
    <property type="match status" value="1"/>
</dbReference>
<dbReference type="PROSITE" id="PS50005">
    <property type="entry name" value="TPR"/>
    <property type="match status" value="2"/>
</dbReference>
<dbReference type="PROSITE" id="PS50293">
    <property type="entry name" value="TPR_REGION"/>
    <property type="match status" value="1"/>
</dbReference>
<protein>
    <recommendedName>
        <fullName evidence="6">Protein adenylyltransferase FICD</fullName>
        <ecNumber evidence="2">2.7.7.108</ecNumber>
    </recommendedName>
    <alternativeName>
        <fullName evidence="2">AMPylator FICD</fullName>
    </alternativeName>
    <alternativeName>
        <fullName evidence="1">De-AMPylase FICD</fullName>
        <ecNumber evidence="1">3.1.4.-</ecNumber>
    </alternativeName>
    <alternativeName>
        <fullName evidence="2">FIC domain-containing protein</fullName>
    </alternativeName>
</protein>
<name>FICD_XENTR</name>
<keyword id="KW-0067">ATP-binding</keyword>
<keyword id="KW-0256">Endoplasmic reticulum</keyword>
<keyword id="KW-0325">Glycoprotein</keyword>
<keyword id="KW-0378">Hydrolase</keyword>
<keyword id="KW-0460">Magnesium</keyword>
<keyword id="KW-0464">Manganese</keyword>
<keyword id="KW-0472">Membrane</keyword>
<keyword id="KW-0547">Nucleotide-binding</keyword>
<keyword id="KW-0548">Nucleotidyltransferase</keyword>
<keyword id="KW-1185">Reference proteome</keyword>
<keyword id="KW-0677">Repeat</keyword>
<keyword id="KW-0735">Signal-anchor</keyword>
<keyword id="KW-0802">TPR repeat</keyword>
<keyword id="KW-0808">Transferase</keyword>
<keyword id="KW-0812">Transmembrane</keyword>
<keyword id="KW-1133">Transmembrane helix</keyword>
<keyword id="KW-0834">Unfolded protein response</keyword>
<reference key="1">
    <citation type="submission" date="2008-07" db="EMBL/GenBank/DDBJ databases">
        <authorList>
            <consortium name="NIH - Xenopus Gene Collection (XGC) project"/>
        </authorList>
    </citation>
    <scope>NUCLEOTIDE SEQUENCE [LARGE SCALE MRNA]</scope>
    <source>
        <tissue>Embryo</tissue>
    </source>
</reference>
<accession>B4F6I5</accession>
<comment type="function">
    <text evidence="1 2">Protein that can both mediate the addition of adenosine 5'-monophosphate (AMP) to specific residues of target proteins (AMPylation), and the removal of the same modification from target proteins (de-AMPylation), depending on the context (By similarity). The side chain of Glu-222 determines which of the two opposing activities (AMPylase or de-AMPylase) will take place (By similarity). Acts as a key regulator of the ERN1/IRE1-mediated unfolded protein response (UPR) by mediating AMPylation or de-AMPylation of HSPA5/BiP (By similarity). In unstressed cells, acts as an adenylyltransferase by mediating AMPylation of HSPA5/BiP at 'Thr-518', thereby inactivating it (By similarity). In response to endoplasmic reticulum stress, acts as a phosphodiesterase by mediating removal of ATP (de-AMPylation) from HSPA5/BiP at 'Thr-518', leading to restore HSPA5/BiP activity (By similarity).</text>
</comment>
<comment type="catalytic activity">
    <reaction evidence="2">
        <text>L-tyrosyl-[protein] + ATP = O-(5'-adenylyl)-L-tyrosyl-[protein] + diphosphate</text>
        <dbReference type="Rhea" id="RHEA:54288"/>
        <dbReference type="Rhea" id="RHEA-COMP:10136"/>
        <dbReference type="Rhea" id="RHEA-COMP:13846"/>
        <dbReference type="ChEBI" id="CHEBI:30616"/>
        <dbReference type="ChEBI" id="CHEBI:33019"/>
        <dbReference type="ChEBI" id="CHEBI:46858"/>
        <dbReference type="ChEBI" id="CHEBI:83624"/>
        <dbReference type="EC" id="2.7.7.108"/>
    </reaction>
</comment>
<comment type="catalytic activity">
    <reaction evidence="1">
        <text>3-O-(5'-adenylyl)-L-threonyl-[protein] + H2O = L-threonyl-[protein] + AMP + H(+)</text>
        <dbReference type="Rhea" id="RHEA:55932"/>
        <dbReference type="Rhea" id="RHEA-COMP:11060"/>
        <dbReference type="Rhea" id="RHEA-COMP:13847"/>
        <dbReference type="ChEBI" id="CHEBI:15377"/>
        <dbReference type="ChEBI" id="CHEBI:15378"/>
        <dbReference type="ChEBI" id="CHEBI:30013"/>
        <dbReference type="ChEBI" id="CHEBI:138113"/>
        <dbReference type="ChEBI" id="CHEBI:456215"/>
    </reaction>
</comment>
<comment type="catalytic activity">
    <reaction evidence="2">
        <text>L-threonyl-[protein] + ATP = 3-O-(5'-adenylyl)-L-threonyl-[protein] + diphosphate</text>
        <dbReference type="Rhea" id="RHEA:54292"/>
        <dbReference type="Rhea" id="RHEA-COMP:11060"/>
        <dbReference type="Rhea" id="RHEA-COMP:13847"/>
        <dbReference type="ChEBI" id="CHEBI:30013"/>
        <dbReference type="ChEBI" id="CHEBI:30616"/>
        <dbReference type="ChEBI" id="CHEBI:33019"/>
        <dbReference type="ChEBI" id="CHEBI:138113"/>
        <dbReference type="EC" id="2.7.7.108"/>
    </reaction>
</comment>
<comment type="cofactor">
    <cofactor evidence="2">
        <name>Mg(2+)</name>
        <dbReference type="ChEBI" id="CHEBI:18420"/>
    </cofactor>
    <cofactor evidence="2">
        <name>Mn(2+)</name>
        <dbReference type="ChEBI" id="CHEBI:29035"/>
    </cofactor>
    <text evidence="2">Divalent metal cation. Prefers Mn(2+) over Mg(2+).</text>
</comment>
<comment type="activity regulation">
    <text evidence="1 2">The side chain of Glu-222 determines which of the two opposing activities (AMPylase or de-AMPylase) will take place. In response to endoplasmic reticulum stress, mediates de-AMPylase activity (By similarity). Adenylyltransferase activity is inhibited by the inhibitory helix present at the N-terminus: Glu-222 binds ATP and competes with ATP-binding at Arg-362, thereby preventing adenylyltransferase activity (By similarity). In unstressed cells, disengagement of Glu-222 promotes adenylyltransferase activity (By similarity). Activation dissociates ATP-binding from Glu-222, allowing ordered binding of the entire ATP moiety with the alpha-phosphate in an orientation that is productive for accepting an incoming target hydroxyl side chain (By similarity).</text>
</comment>
<comment type="subunit">
    <text evidence="2">Homodimer.</text>
</comment>
<comment type="subcellular location">
    <subcellularLocation>
        <location evidence="2">Endoplasmic reticulum membrane</location>
        <topology evidence="2">Single-pass type II membrane protein</topology>
    </subcellularLocation>
</comment>
<comment type="domain">
    <text evidence="2">The fido domain mediates the adenylyltransferase activity.</text>
</comment>
<comment type="similarity">
    <text evidence="6">Belongs to the fic family.</text>
</comment>
<organism>
    <name type="scientific">Xenopus tropicalis</name>
    <name type="common">Western clawed frog</name>
    <name type="synonym">Silurana tropicalis</name>
    <dbReference type="NCBI Taxonomy" id="8364"/>
    <lineage>
        <taxon>Eukaryota</taxon>
        <taxon>Metazoa</taxon>
        <taxon>Chordata</taxon>
        <taxon>Craniata</taxon>
        <taxon>Vertebrata</taxon>
        <taxon>Euteleostomi</taxon>
        <taxon>Amphibia</taxon>
        <taxon>Batrachia</taxon>
        <taxon>Anura</taxon>
        <taxon>Pipoidea</taxon>
        <taxon>Pipidae</taxon>
        <taxon>Xenopodinae</taxon>
        <taxon>Xenopus</taxon>
        <taxon>Silurana</taxon>
    </lineage>
</organism>